<reference key="1">
    <citation type="journal article" date="1998" name="J. Mol. Evol.">
        <title>Molecular timing of primate divergences as estimated by two nonprimate calibration points.</title>
        <authorList>
            <person name="Arnason U."/>
            <person name="Gullberg A."/>
            <person name="Janke A."/>
        </authorList>
    </citation>
    <scope>NUCLEOTIDE SEQUENCE [GENOMIC DNA]</scope>
</reference>
<reference key="2">
    <citation type="journal article" date="1996" name="Mol. Biol. Evol.">
        <title>Molecular phylogeny of macaques: implications of nucleotide sequences from an 896-base pair region of mitochondrial DNA.</title>
        <authorList>
            <person name="Hayasaka K."/>
            <person name="Fujii K."/>
            <person name="Horai S."/>
        </authorList>
    </citation>
    <scope>NUCLEOTIDE SEQUENCE [GENOMIC DNA] OF 1-79</scope>
</reference>
<evidence type="ECO:0000250" key="1">
    <source>
        <dbReference type="UniProtKB" id="P03915"/>
    </source>
</evidence>
<evidence type="ECO:0000250" key="2">
    <source>
        <dbReference type="UniProtKB" id="P03920"/>
    </source>
</evidence>
<evidence type="ECO:0000255" key="3"/>
<evidence type="ECO:0000305" key="4"/>
<protein>
    <recommendedName>
        <fullName>NADH-ubiquinone oxidoreductase chain 5</fullName>
        <ecNumber evidence="1">7.1.1.2</ecNumber>
    </recommendedName>
    <alternativeName>
        <fullName>NADH dehydrogenase subunit 5</fullName>
    </alternativeName>
</protein>
<comment type="function">
    <text evidence="1">Core subunit of the mitochondrial membrane respiratory chain NADH dehydrogenase (Complex I) which catalyzes electron transfer from NADH through the respiratory chain, using ubiquinone as an electron acceptor. Essential for the catalytic activity and assembly of complex I.</text>
</comment>
<comment type="catalytic activity">
    <reaction evidence="1">
        <text>a ubiquinone + NADH + 5 H(+)(in) = a ubiquinol + NAD(+) + 4 H(+)(out)</text>
        <dbReference type="Rhea" id="RHEA:29091"/>
        <dbReference type="Rhea" id="RHEA-COMP:9565"/>
        <dbReference type="Rhea" id="RHEA-COMP:9566"/>
        <dbReference type="ChEBI" id="CHEBI:15378"/>
        <dbReference type="ChEBI" id="CHEBI:16389"/>
        <dbReference type="ChEBI" id="CHEBI:17976"/>
        <dbReference type="ChEBI" id="CHEBI:57540"/>
        <dbReference type="ChEBI" id="CHEBI:57945"/>
        <dbReference type="EC" id="7.1.1.2"/>
    </reaction>
</comment>
<comment type="subunit">
    <text evidence="2">Core subunit of respiratory chain NADH dehydrogenase (Complex I) which is composed of 45 different subunits.</text>
</comment>
<comment type="subcellular location">
    <subcellularLocation>
        <location evidence="2">Mitochondrion inner membrane</location>
        <topology evidence="3">Multi-pass membrane protein</topology>
    </subcellularLocation>
</comment>
<comment type="similarity">
    <text evidence="4">Belongs to the complex I subunit 5 family.</text>
</comment>
<keyword id="KW-0249">Electron transport</keyword>
<keyword id="KW-0472">Membrane</keyword>
<keyword id="KW-0496">Mitochondrion</keyword>
<keyword id="KW-0999">Mitochondrion inner membrane</keyword>
<keyword id="KW-0520">NAD</keyword>
<keyword id="KW-0679">Respiratory chain</keyword>
<keyword id="KW-1278">Translocase</keyword>
<keyword id="KW-0812">Transmembrane</keyword>
<keyword id="KW-1133">Transmembrane helix</keyword>
<keyword id="KW-0813">Transport</keyword>
<keyword id="KW-0830">Ubiquinone</keyword>
<accession>Q95885</accession>
<organism>
    <name type="scientific">Papio hamadryas</name>
    <name type="common">Hamadryas baboon</name>
    <dbReference type="NCBI Taxonomy" id="9557"/>
    <lineage>
        <taxon>Eukaryota</taxon>
        <taxon>Metazoa</taxon>
        <taxon>Chordata</taxon>
        <taxon>Craniata</taxon>
        <taxon>Vertebrata</taxon>
        <taxon>Euteleostomi</taxon>
        <taxon>Mammalia</taxon>
        <taxon>Eutheria</taxon>
        <taxon>Euarchontoglires</taxon>
        <taxon>Primates</taxon>
        <taxon>Haplorrhini</taxon>
        <taxon>Catarrhini</taxon>
        <taxon>Cercopithecidae</taxon>
        <taxon>Cercopithecinae</taxon>
        <taxon>Papio</taxon>
    </lineage>
</organism>
<sequence>MAMYTSIMLMTLASLALPIFATLVNPNKTHSYPNYVKTTMMYAFITSLIPTTLYIFSNQETTIWSWHWMMTQTLDLTLSFKLDYFSMMFIPIALFITWSIMEFSLWYMSSDPNINQFFKYLLIFLITMLILITANNLFQLFIGWEGVGIMSFLLISWWHARTDANTAAIQAVLYNRIGDIGLILAMVWFLLHYNSWDFQQMLALNPHPSPLPLMGLLLAAVGKSAQFGLHPWLPSAMEGPTPVSALLHSSTMVVAGVFLLIRFHPLMENDTLTQNLTLCLGAITTLFMAMCALTQNDIKKIVAFSTSSQLGLMMITIGINQPYLAFLHICTHAFFKAMLFICSGSIIHNLNNEQDIRKMGGLFKTMPLTSTSLIIGNLALTGIPFLTGFYSKDLIIEATSTSYTNAWALSITLIATSLTSAYSTRTILLTLTGQPRFPTLTNINENNPALLNPIKRLTTASMITGFLITNNIPPTSLPQPTMPLHLKLLALYMTALGFIITLDLTLMTNKLKVKTPPQTFKFSNMLGYFPTIAHRMIPHQNLLMSQNLALLLLDSMWLEKSMPKMISQTHITASTTVTAQKSMIKLYFLSFLIPLALALLLMV</sequence>
<geneLocation type="mitochondrion"/>
<proteinExistence type="inferred from homology"/>
<gene>
    <name type="primary">MT-ND5</name>
    <name type="synonym">MTND5</name>
    <name type="synonym">NADH5</name>
    <name type="synonym">ND5</name>
</gene>
<dbReference type="EC" id="7.1.1.2" evidence="1"/>
<dbReference type="EMBL" id="Y18001">
    <property type="protein sequence ID" value="CAA77004.1"/>
    <property type="molecule type" value="Genomic_DNA"/>
</dbReference>
<dbReference type="EMBL" id="D85290">
    <property type="protein sequence ID" value="BAA12792.1"/>
    <property type="molecule type" value="Genomic_DNA"/>
</dbReference>
<dbReference type="PIR" id="T11516">
    <property type="entry name" value="T11516"/>
</dbReference>
<dbReference type="RefSeq" id="NP_008468.1">
    <property type="nucleotide sequence ID" value="NC_001992.1"/>
</dbReference>
<dbReference type="SMR" id="Q95885"/>
<dbReference type="GeneID" id="808320"/>
<dbReference type="CTD" id="4540"/>
<dbReference type="GO" id="GO:0005743">
    <property type="term" value="C:mitochondrial inner membrane"/>
    <property type="evidence" value="ECO:0000250"/>
    <property type="project" value="UniProtKB"/>
</dbReference>
<dbReference type="GO" id="GO:0008137">
    <property type="term" value="F:NADH dehydrogenase (ubiquinone) activity"/>
    <property type="evidence" value="ECO:0000250"/>
    <property type="project" value="UniProtKB"/>
</dbReference>
<dbReference type="GO" id="GO:0015990">
    <property type="term" value="P:electron transport coupled proton transport"/>
    <property type="evidence" value="ECO:0007669"/>
    <property type="project" value="TreeGrafter"/>
</dbReference>
<dbReference type="GO" id="GO:0006120">
    <property type="term" value="P:mitochondrial electron transport, NADH to ubiquinone"/>
    <property type="evidence" value="ECO:0000250"/>
    <property type="project" value="UniProtKB"/>
</dbReference>
<dbReference type="GO" id="GO:0032981">
    <property type="term" value="P:mitochondrial respiratory chain complex I assembly"/>
    <property type="evidence" value="ECO:0000250"/>
    <property type="project" value="UniProtKB"/>
</dbReference>
<dbReference type="InterPro" id="IPR010934">
    <property type="entry name" value="NADH_DH_su5_C"/>
</dbReference>
<dbReference type="InterPro" id="IPR018393">
    <property type="entry name" value="NADHpl_OxRdtase_5_subgr"/>
</dbReference>
<dbReference type="InterPro" id="IPR001750">
    <property type="entry name" value="ND/Mrp_TM"/>
</dbReference>
<dbReference type="InterPro" id="IPR003945">
    <property type="entry name" value="NU5C-like"/>
</dbReference>
<dbReference type="InterPro" id="IPR001516">
    <property type="entry name" value="Proton_antipo_N"/>
</dbReference>
<dbReference type="NCBIfam" id="TIGR01974">
    <property type="entry name" value="NDH_I_L"/>
    <property type="match status" value="1"/>
</dbReference>
<dbReference type="PANTHER" id="PTHR42829">
    <property type="entry name" value="NADH-UBIQUINONE OXIDOREDUCTASE CHAIN 5"/>
    <property type="match status" value="1"/>
</dbReference>
<dbReference type="PANTHER" id="PTHR42829:SF2">
    <property type="entry name" value="NADH-UBIQUINONE OXIDOREDUCTASE CHAIN 5"/>
    <property type="match status" value="1"/>
</dbReference>
<dbReference type="Pfam" id="PF06455">
    <property type="entry name" value="NADH5_C"/>
    <property type="match status" value="1"/>
</dbReference>
<dbReference type="Pfam" id="PF00361">
    <property type="entry name" value="Proton_antipo_M"/>
    <property type="match status" value="1"/>
</dbReference>
<dbReference type="Pfam" id="PF00662">
    <property type="entry name" value="Proton_antipo_N"/>
    <property type="match status" value="1"/>
</dbReference>
<dbReference type="PRINTS" id="PR01434">
    <property type="entry name" value="NADHDHGNASE5"/>
</dbReference>
<dbReference type="PRINTS" id="PR01435">
    <property type="entry name" value="NPOXDRDTASE5"/>
</dbReference>
<feature type="chain" id="PRO_0000118124" description="NADH-ubiquinone oxidoreductase chain 5">
    <location>
        <begin position="1"/>
        <end position="603"/>
    </location>
</feature>
<feature type="transmembrane region" description="Helical" evidence="3">
    <location>
        <begin position="4"/>
        <end position="24"/>
    </location>
</feature>
<feature type="transmembrane region" description="Helical" evidence="3">
    <location>
        <begin position="36"/>
        <end position="56"/>
    </location>
</feature>
<feature type="transmembrane region" description="Helical" evidence="3">
    <location>
        <begin position="87"/>
        <end position="107"/>
    </location>
</feature>
<feature type="transmembrane region" description="Helical" evidence="3">
    <location>
        <begin position="122"/>
        <end position="142"/>
    </location>
</feature>
<feature type="transmembrane region" description="Helical" evidence="3">
    <location>
        <begin position="171"/>
        <end position="191"/>
    </location>
</feature>
<feature type="transmembrane region" description="Helical" evidence="3">
    <location>
        <begin position="211"/>
        <end position="233"/>
    </location>
</feature>
<feature type="transmembrane region" description="Helical" evidence="3">
    <location>
        <begin position="241"/>
        <end position="261"/>
    </location>
</feature>
<feature type="transmembrane region" description="Helical" evidence="3">
    <location>
        <begin position="272"/>
        <end position="292"/>
    </location>
</feature>
<feature type="transmembrane region" description="Helical" evidence="3">
    <location>
        <begin position="301"/>
        <end position="320"/>
    </location>
</feature>
<feature type="transmembrane region" description="Helical" evidence="3">
    <location>
        <begin position="325"/>
        <end position="347"/>
    </location>
</feature>
<feature type="transmembrane region" description="Helical" evidence="3">
    <location>
        <begin position="370"/>
        <end position="390"/>
    </location>
</feature>
<feature type="transmembrane region" description="Helical" evidence="3">
    <location>
        <begin position="406"/>
        <end position="422"/>
    </location>
</feature>
<feature type="transmembrane region" description="Helical" evidence="3">
    <location>
        <begin position="488"/>
        <end position="508"/>
    </location>
</feature>
<feature type="transmembrane region" description="Helical" evidence="3">
    <location>
        <begin position="583"/>
        <end position="603"/>
    </location>
</feature>
<name>NU5M_PAPHA</name>